<name>FKH3_CAEEL</name>
<feature type="chain" id="PRO_0000454784" description="Forkhead box protein fkh-3">
    <location>
        <begin position="1"/>
        <end position="421"/>
    </location>
</feature>
<feature type="DNA-binding region" description="Fork-head" evidence="2">
    <location>
        <begin position="118"/>
        <end position="218"/>
    </location>
</feature>
<feature type="splice variant" id="VSP_061392" description="In isoform b." evidence="5">
    <original>QYDLFDGFAEFGFLEQVPTTNMHSFS</original>
    <variation>H</variation>
    <location>
        <begin position="33"/>
        <end position="58"/>
    </location>
</feature>
<comment type="function">
    <text evidence="1 4">Transcription factor (By similarity). Binds to DNA sequence motif 5'-CTGTTTCA-3' (PubMed:22819322). Regulates expression of a class of small RNAs, known as 21U-RNAs, perhaps acting redundantly with fkh-4 and fkh-5 (PubMed:22819322).</text>
</comment>
<comment type="subcellular location">
    <subcellularLocation>
        <location evidence="2 3">Nucleus</location>
    </subcellularLocation>
</comment>
<comment type="alternative products">
    <event type="alternative splicing"/>
    <isoform>
        <id>A0A078BQN7-1</id>
        <name evidence="7">a</name>
        <sequence type="displayed"/>
    </isoform>
    <isoform>
        <id>A0A078BQN7-2</id>
        <name evidence="8">b</name>
        <sequence type="described" ref="VSP_061392"/>
    </isoform>
</comment>
<comment type="developmental stage">
    <text evidence="3">Expressed in most cells of the cleavage stage embryo, apart from a few cells at the posterior pole, from the 20 cell stage to the 200 cell stage.</text>
</comment>
<comment type="disruption phenotype">
    <text evidence="4">RNAi-mediated knockdown causes significant reduction in the expression of 21U-RNAs, upon simultaneous knockdown of fkh-4 and fkh-5.</text>
</comment>
<organism evidence="6">
    <name type="scientific">Caenorhabditis elegans</name>
    <dbReference type="NCBI Taxonomy" id="6239"/>
    <lineage>
        <taxon>Eukaryota</taxon>
        <taxon>Metazoa</taxon>
        <taxon>Ecdysozoa</taxon>
        <taxon>Nematoda</taxon>
        <taxon>Chromadorea</taxon>
        <taxon>Rhabditida</taxon>
        <taxon>Rhabditina</taxon>
        <taxon>Rhabditomorpha</taxon>
        <taxon>Rhabditoidea</taxon>
        <taxon>Rhabditidae</taxon>
        <taxon>Peloderinae</taxon>
        <taxon>Caenorhabditis</taxon>
    </lineage>
</organism>
<reference evidence="6" key="1">
    <citation type="journal article" date="1998" name="Science">
        <title>Genome sequence of the nematode C. elegans: a platform for investigating biology.</title>
        <authorList>
            <consortium name="The C. elegans sequencing consortium"/>
        </authorList>
    </citation>
    <scope>NUCLEOTIDE SEQUENCE [LARGE SCALE GENOMIC DNA]</scope>
    <source>
        <strain evidence="6">Bristol N2</strain>
    </source>
</reference>
<reference evidence="5" key="2">
    <citation type="journal article" date="2003" name="Gene">
        <title>The forkhead gene family of Caenorhabditis elegans.</title>
        <authorList>
            <person name="Hope I.A."/>
            <person name="Mounsey A."/>
            <person name="Bauer P."/>
            <person name="Aslam S."/>
        </authorList>
    </citation>
    <scope>SUBCELLULAR LOCATION</scope>
    <scope>DEVELOPMENTAL STAGE</scope>
</reference>
<reference evidence="5" key="3">
    <citation type="journal article" date="2012" name="Mol. Cell">
        <title>Promoters recognized by forkhead proteins exist for individual 21U-RNAs.</title>
        <authorList>
            <person name="Cecere G."/>
            <person name="Zheng G.X."/>
            <person name="Mansisidor A.R."/>
            <person name="Klymko K.E."/>
            <person name="Grishok A."/>
        </authorList>
    </citation>
    <scope>FUNCTION</scope>
    <scope>DISRUPTION PHENOTYPE</scope>
</reference>
<sequence length="421" mass="48819">MQSNDENIYFPANQYVNAGQYSPLQQSFSQNSQYDLFDGFAEFGFLEQVPTTNMHSFSQSTQMEQNCLPNVNNSTRKRKAPGQNEQATVKRRQIGIEKWRLPSRSVVQPSADISDLRRPPISYVALCALACRNAPDMKITPAGVYAFILHHWRYYRYANENWKNSVRHQLSSKEHFDEETFQPDPSNQTVRRKFYIVKNPNMIRQNLISDADFDFFRKDSRGIEFYQKMFAGQIGLPRSLFYQIIGNEIPFLAGPENSSMFYQLLGMGKVVGYLETRYFREHYRSEHAATEPKYEEDYANFTEKIPSNAENLMSYGAATERNFQKFDFTDEEIELFHLNISSYHSVQKTCKECNLPNWCTPSVGDVETYVFGRQVPMPVNTPVILQQFETVAEQEGIRNNPLEEQKTTKDPRDISVLEALA</sequence>
<proteinExistence type="evidence at transcript level"/>
<gene>
    <name evidence="7" type="primary">fkh-3</name>
    <name evidence="7" type="ORF">C29F7.4</name>
</gene>
<protein>
    <recommendedName>
        <fullName evidence="5">Forkhead box protein fkh-3</fullName>
    </recommendedName>
</protein>
<keyword id="KW-0025">Alternative splicing</keyword>
<keyword id="KW-0238">DNA-binding</keyword>
<keyword id="KW-0539">Nucleus</keyword>
<keyword id="KW-1185">Reference proteome</keyword>
<keyword id="KW-0804">Transcription</keyword>
<dbReference type="EMBL" id="BX284606">
    <property type="protein sequence ID" value="CDX47492.1"/>
    <property type="molecule type" value="Genomic_DNA"/>
</dbReference>
<dbReference type="EMBL" id="BX284606">
    <property type="protein sequence ID" value="CDX47493.1"/>
    <property type="molecule type" value="Genomic_DNA"/>
</dbReference>
<dbReference type="RefSeq" id="NP_001294822.1">
    <molecule id="A0A078BQN7-1"/>
    <property type="nucleotide sequence ID" value="NM_001307893.4"/>
</dbReference>
<dbReference type="RefSeq" id="NP_001294823.1">
    <molecule id="A0A078BQN7-2"/>
    <property type="nucleotide sequence ID" value="NM_001307894.4"/>
</dbReference>
<dbReference type="SMR" id="A0A078BQN7"/>
<dbReference type="FunCoup" id="A0A078BQN7">
    <property type="interactions" value="18"/>
</dbReference>
<dbReference type="STRING" id="6239.C29F7.4a.1"/>
<dbReference type="EnsemblMetazoa" id="C29F7.4a.1">
    <molecule id="A0A078BQN7-1"/>
    <property type="protein sequence ID" value="C29F7.4a.1"/>
    <property type="gene ID" value="WBGene00001435"/>
</dbReference>
<dbReference type="EnsemblMetazoa" id="C29F7.4b.1">
    <molecule id="A0A078BQN7-2"/>
    <property type="protein sequence ID" value="C29F7.4b.1"/>
    <property type="gene ID" value="WBGene00001435"/>
</dbReference>
<dbReference type="GeneID" id="181465"/>
<dbReference type="KEGG" id="cel:CELE_C29F7.4"/>
<dbReference type="AGR" id="WB:WBGene00001435"/>
<dbReference type="CTD" id="181465"/>
<dbReference type="WormBase" id="C29F7.4a">
    <molecule id="A0A078BQN7-1"/>
    <property type="protein sequence ID" value="CE50018"/>
    <property type="gene ID" value="WBGene00001435"/>
    <property type="gene designation" value="fkh-3"/>
</dbReference>
<dbReference type="WormBase" id="C29F7.4b">
    <molecule id="A0A078BQN7-2"/>
    <property type="protein sequence ID" value="CE50009"/>
    <property type="gene ID" value="WBGene00001435"/>
    <property type="gene designation" value="fkh-3"/>
</dbReference>
<dbReference type="GeneTree" id="ENSGT00970000197133"/>
<dbReference type="InParanoid" id="A0A078BQN7"/>
<dbReference type="OrthoDB" id="5875547at2759"/>
<dbReference type="PRO" id="PR:A0A078BQN7"/>
<dbReference type="Proteomes" id="UP000001940">
    <property type="component" value="Chromosome X"/>
</dbReference>
<dbReference type="Bgee" id="WBGene00001435">
    <property type="expression patterns" value="Expressed in embryo and 2 other cell types or tissues"/>
</dbReference>
<dbReference type="ExpressionAtlas" id="A0A078BQN7">
    <property type="expression patterns" value="baseline and differential"/>
</dbReference>
<dbReference type="GO" id="GO:0005634">
    <property type="term" value="C:nucleus"/>
    <property type="evidence" value="ECO:0007669"/>
    <property type="project" value="UniProtKB-SubCell"/>
</dbReference>
<dbReference type="GO" id="GO:0000981">
    <property type="term" value="F:DNA-binding transcription factor activity, RNA polymerase II-specific"/>
    <property type="evidence" value="ECO:0000318"/>
    <property type="project" value="GO_Central"/>
</dbReference>
<dbReference type="GO" id="GO:0000978">
    <property type="term" value="F:RNA polymerase II cis-regulatory region sequence-specific DNA binding"/>
    <property type="evidence" value="ECO:0000318"/>
    <property type="project" value="GO_Central"/>
</dbReference>
<dbReference type="GO" id="GO:0000977">
    <property type="term" value="F:RNA polymerase II transcription regulatory region sequence-specific DNA binding"/>
    <property type="evidence" value="ECO:0000314"/>
    <property type="project" value="WormBase"/>
</dbReference>
<dbReference type="GO" id="GO:0009653">
    <property type="term" value="P:anatomical structure morphogenesis"/>
    <property type="evidence" value="ECO:0000318"/>
    <property type="project" value="GO_Central"/>
</dbReference>
<dbReference type="GO" id="GO:0030154">
    <property type="term" value="P:cell differentiation"/>
    <property type="evidence" value="ECO:0000318"/>
    <property type="project" value="GO_Central"/>
</dbReference>
<dbReference type="GO" id="GO:0006357">
    <property type="term" value="P:regulation of transcription by RNA polymerase II"/>
    <property type="evidence" value="ECO:0000318"/>
    <property type="project" value="GO_Central"/>
</dbReference>
<dbReference type="CDD" id="cd00059">
    <property type="entry name" value="FH_FOX"/>
    <property type="match status" value="1"/>
</dbReference>
<dbReference type="FunFam" id="1.10.10.10:FF:001277">
    <property type="entry name" value="ForKHead transcription factor family"/>
    <property type="match status" value="1"/>
</dbReference>
<dbReference type="Gene3D" id="1.10.10.10">
    <property type="entry name" value="Winged helix-like DNA-binding domain superfamily/Winged helix DNA-binding domain"/>
    <property type="match status" value="1"/>
</dbReference>
<dbReference type="InterPro" id="IPR001766">
    <property type="entry name" value="Fork_head_dom"/>
</dbReference>
<dbReference type="InterPro" id="IPR050211">
    <property type="entry name" value="FOX_domain-containing"/>
</dbReference>
<dbReference type="InterPro" id="IPR030456">
    <property type="entry name" value="TF_fork_head_CS_2"/>
</dbReference>
<dbReference type="InterPro" id="IPR036388">
    <property type="entry name" value="WH-like_DNA-bd_sf"/>
</dbReference>
<dbReference type="InterPro" id="IPR036390">
    <property type="entry name" value="WH_DNA-bd_sf"/>
</dbReference>
<dbReference type="PANTHER" id="PTHR11829:SF388">
    <property type="entry name" value="FORK HEAD DOMAIN-CONTAINING PROTEIN L1-RELATED"/>
    <property type="match status" value="1"/>
</dbReference>
<dbReference type="PANTHER" id="PTHR11829">
    <property type="entry name" value="FORKHEAD BOX PROTEIN"/>
    <property type="match status" value="1"/>
</dbReference>
<dbReference type="Pfam" id="PF00250">
    <property type="entry name" value="Forkhead"/>
    <property type="match status" value="1"/>
</dbReference>
<dbReference type="PRINTS" id="PR00053">
    <property type="entry name" value="FORKHEAD"/>
</dbReference>
<dbReference type="SMART" id="SM00339">
    <property type="entry name" value="FH"/>
    <property type="match status" value="1"/>
</dbReference>
<dbReference type="SUPFAM" id="SSF46785">
    <property type="entry name" value="Winged helix' DNA-binding domain"/>
    <property type="match status" value="1"/>
</dbReference>
<dbReference type="PROSITE" id="PS00658">
    <property type="entry name" value="FORK_HEAD_2"/>
    <property type="match status" value="1"/>
</dbReference>
<dbReference type="PROSITE" id="PS50039">
    <property type="entry name" value="FORK_HEAD_3"/>
    <property type="match status" value="1"/>
</dbReference>
<accession>A0A078BQN7</accession>
<accession>A0A078BTN3</accession>
<evidence type="ECO:0000250" key="1">
    <source>
        <dbReference type="UniProtKB" id="Q12948"/>
    </source>
</evidence>
<evidence type="ECO:0000255" key="2">
    <source>
        <dbReference type="PROSITE-ProRule" id="PRU00089"/>
    </source>
</evidence>
<evidence type="ECO:0000269" key="3">
    <source>
    </source>
</evidence>
<evidence type="ECO:0000269" key="4">
    <source>
    </source>
</evidence>
<evidence type="ECO:0000305" key="5"/>
<evidence type="ECO:0000312" key="6">
    <source>
        <dbReference type="Proteomes" id="UP000001940"/>
    </source>
</evidence>
<evidence type="ECO:0000312" key="7">
    <source>
        <dbReference type="WormBase" id="C29F7.4a"/>
    </source>
</evidence>
<evidence type="ECO:0000312" key="8">
    <source>
        <dbReference type="WormBase" id="C29F7.4b"/>
    </source>
</evidence>